<accession>P86229</accession>
<comment type="function">
    <text evidence="1">Subunit of STT3A-containing oligosaccharyl transferase (OST-A) complex that catalyzes the initial transfer of a defined glycan (Glc(3)Man(9)GlcNAc(2) in eukaryotes) from the lipid carrier dolichol-pyrophosphate to an asparagine residue within an Asn-X-Ser/Thr consensus motif in nascent polypeptide chains, the first step in protein N-glycosylation. N-glycosylation occurs cotranslationally and the complex associates with the Sec61 complex at the channel-forming translocon complex that mediates protein translocation across the endoplasmic reticulum (ER). Within the OST-A complex, acts as an adapter that anchors the OST-A complex to the Sec61 complex. May be involved in N-glycosylation of APP (amyloid-beta precursor protein). Can modulate gamma-secretase cleavage of APP by enhancing endoprotelysis of PSEN1.</text>
</comment>
<comment type="pathway">
    <text evidence="1">Protein modification; protein glycosylation.</text>
</comment>
<comment type="subunit">
    <text evidence="1 4">Component of STT3A-containing oligosaccharyl transferase (OST-A) complex (PubMed:15835887). STT3A-containing complex assembly occurs through the formation of 3 subcomplexes (PubMed:15835887). Subcomplex 1 contains RPN1 and TMEM258, subcomplex 2 contains the STT3A-specific subunits STT3A, DC2/OSTC, and KCP2 as well as the core subunit OST4, and subcomplex 3 contains RPN2, DAD1, and OST48 (PubMed:15835887). The OST-A complex can form stable complexes with the Sec61 complex or with both the Sec61 and TRAP complexes (PubMed:15835887). Interacts with PSEN1 and NCSTN; indicative for an association with the gamma-secretase complex (By similarity).</text>
</comment>
<comment type="subcellular location">
    <subcellularLocation>
        <location evidence="1">Endoplasmic reticulum membrane</location>
        <topology evidence="1">Multi-pass membrane protein</topology>
    </subcellularLocation>
</comment>
<comment type="similarity">
    <text evidence="2">Belongs to the KRTCAP2 family.</text>
</comment>
<dbReference type="EMBL" id="BQ234307">
    <property type="status" value="NOT_ANNOTATED_CDS"/>
    <property type="molecule type" value="mRNA"/>
</dbReference>
<dbReference type="RefSeq" id="NP_001153594.1">
    <property type="nucleotide sequence ID" value="NM_001160122.1"/>
</dbReference>
<dbReference type="CORUM" id="P86229"/>
<dbReference type="FunCoup" id="P86229">
    <property type="interactions" value="241"/>
</dbReference>
<dbReference type="STRING" id="9615.ENSCAFP00000051509"/>
<dbReference type="PaxDb" id="9612-ENSCAFP00000041753"/>
<dbReference type="Ensembl" id="ENSCAFT00000027005.4">
    <property type="protein sequence ID" value="ENSCAFP00000025106.2"/>
    <property type="gene ID" value="ENSCAFG00000017055.5"/>
</dbReference>
<dbReference type="Ensembl" id="ENSCAFT00040002833.1">
    <property type="protein sequence ID" value="ENSCAFP00040002451.1"/>
    <property type="gene ID" value="ENSCAFG00040001478.1"/>
</dbReference>
<dbReference type="Ensembl" id="ENSCAFT00845023652.1">
    <property type="protein sequence ID" value="ENSCAFP00845018567.1"/>
    <property type="gene ID" value="ENSCAFG00845013256.1"/>
</dbReference>
<dbReference type="GeneID" id="480131"/>
<dbReference type="KEGG" id="cfa:480131"/>
<dbReference type="CTD" id="200185"/>
<dbReference type="VEuPathDB" id="HostDB:ENSCAFG00845013256"/>
<dbReference type="VGNC" id="VGNC:42544">
    <property type="gene designation" value="KRTCAP2"/>
</dbReference>
<dbReference type="eggNOG" id="KOG4615">
    <property type="taxonomic scope" value="Eukaryota"/>
</dbReference>
<dbReference type="GeneTree" id="ENSGT00390000003552"/>
<dbReference type="HOGENOM" id="CLU_109648_2_0_1"/>
<dbReference type="InParanoid" id="P86229"/>
<dbReference type="OMA" id="ITIYYMN"/>
<dbReference type="OrthoDB" id="1111004at2759"/>
<dbReference type="UniPathway" id="UPA00378"/>
<dbReference type="Proteomes" id="UP000002254">
    <property type="component" value="Chromosome 7"/>
</dbReference>
<dbReference type="Proteomes" id="UP000694429">
    <property type="component" value="Unplaced"/>
</dbReference>
<dbReference type="Proteomes" id="UP000694542">
    <property type="component" value="Chromosome 7"/>
</dbReference>
<dbReference type="Proteomes" id="UP000805418">
    <property type="component" value="Chromosome 7"/>
</dbReference>
<dbReference type="Bgee" id="ENSCAFG00000017055">
    <property type="expression patterns" value="Expressed in ovary and 49 other cell types or tissues"/>
</dbReference>
<dbReference type="GO" id="GO:0008250">
    <property type="term" value="C:oligosaccharyltransferase complex"/>
    <property type="evidence" value="ECO:0007669"/>
    <property type="project" value="Ensembl"/>
</dbReference>
<dbReference type="GO" id="GO:0008047">
    <property type="term" value="F:enzyme activator activity"/>
    <property type="evidence" value="ECO:0007669"/>
    <property type="project" value="Ensembl"/>
</dbReference>
<dbReference type="GO" id="GO:0030674">
    <property type="term" value="F:protein-macromolecule adaptor activity"/>
    <property type="evidence" value="ECO:0007669"/>
    <property type="project" value="Ensembl"/>
</dbReference>
<dbReference type="GO" id="GO:0006487">
    <property type="term" value="P:protein N-linked glycosylation"/>
    <property type="evidence" value="ECO:0000318"/>
    <property type="project" value="GO_Central"/>
</dbReference>
<dbReference type="GO" id="GO:0018279">
    <property type="term" value="P:protein N-linked glycosylation via asparagine"/>
    <property type="evidence" value="ECO:0007669"/>
    <property type="project" value="Ensembl"/>
</dbReference>
<dbReference type="InterPro" id="IPR018614">
    <property type="entry name" value="KRTCAP2"/>
</dbReference>
<dbReference type="PANTHER" id="PTHR32001">
    <property type="entry name" value="KERATINOCYTE-ASSOCIATED PROTEIN 2"/>
    <property type="match status" value="1"/>
</dbReference>
<dbReference type="PANTHER" id="PTHR32001:SF1">
    <property type="entry name" value="KERATINOCYTE-ASSOCIATED PROTEIN 2"/>
    <property type="match status" value="1"/>
</dbReference>
<dbReference type="Pfam" id="PF09775">
    <property type="entry name" value="Keratin_assoc"/>
    <property type="match status" value="1"/>
</dbReference>
<organism>
    <name type="scientific">Canis lupus familiaris</name>
    <name type="common">Dog</name>
    <name type="synonym">Canis familiaris</name>
    <dbReference type="NCBI Taxonomy" id="9615"/>
    <lineage>
        <taxon>Eukaryota</taxon>
        <taxon>Metazoa</taxon>
        <taxon>Chordata</taxon>
        <taxon>Craniata</taxon>
        <taxon>Vertebrata</taxon>
        <taxon>Euteleostomi</taxon>
        <taxon>Mammalia</taxon>
        <taxon>Eutheria</taxon>
        <taxon>Laurasiatheria</taxon>
        <taxon>Carnivora</taxon>
        <taxon>Caniformia</taxon>
        <taxon>Canidae</taxon>
        <taxon>Canis</taxon>
    </lineage>
</organism>
<proteinExistence type="evidence at protein level"/>
<protein>
    <recommendedName>
        <fullName>Dolichyl-diphosphooligosaccharide--protein glycosyltransferase subunit KCP2</fullName>
        <shortName>Oligosaccharyl transferase subunit KCP2</shortName>
    </recommendedName>
    <alternativeName>
        <fullName evidence="1">Keratinocyte-associated protein 2</fullName>
        <shortName evidence="1">KCP-2</shortName>
    </alternativeName>
</protein>
<name>KTAP2_CANLF</name>
<reference evidence="5" key="1">
    <citation type="journal article" date="2003" name="J. Hered.">
        <title>A survey of canine expressed sequence tags and a display of their annotations through a flexible web-based interface.</title>
        <authorList>
            <person name="Palmer L.E."/>
            <person name="O'Shaughnessy A.L."/>
            <person name="Preston R.R."/>
            <person name="Santos L."/>
            <person name="Balija V.S."/>
            <person name="Nascimento L.U."/>
            <person name="Zutavern T.L."/>
            <person name="Henthorn P.S."/>
            <person name="Hannon G.J."/>
            <person name="McCombie W.R."/>
        </authorList>
    </citation>
    <scope>NUCLEOTIDE SEQUENCE [MRNA]</scope>
    <source>
        <tissue evidence="3">Brain</tissue>
    </source>
</reference>
<reference evidence="5" key="2">
    <citation type="journal article" date="2005" name="Biochemistry">
        <title>Proteomic analysis of mammalian oligosaccharyltransferase reveals multiple subcomplexes that contain Sec61, TRAP, and two potential new subunits.</title>
        <authorList>
            <person name="Shibatani T."/>
            <person name="David L.L."/>
            <person name="McCormack A.L."/>
            <person name="Frueh K."/>
            <person name="Skach W.R."/>
        </authorList>
    </citation>
    <scope>PROTEIN SEQUENCE OF 111-127</scope>
    <scope>IDENTIFICATION IN THE OLIGOSACCHARYLTRANSFERASE COMPLEX</scope>
</reference>
<evidence type="ECO:0000250" key="1">
    <source>
        <dbReference type="UniProtKB" id="Q8N6L1"/>
    </source>
</evidence>
<evidence type="ECO:0000255" key="2"/>
<evidence type="ECO:0000269" key="3">
    <source>
    </source>
</evidence>
<evidence type="ECO:0000269" key="4">
    <source>
    </source>
</evidence>
<evidence type="ECO:0000305" key="5"/>
<sequence length="136" mass="14650">MAVGTGTSLALSSLLSLLLFAGMQMYSRQLASTEWLTIQGGLLGSGLFVFSLTAFNNLENLVFGKGFQAKIFPEILLCLLLALFASGLIHRVCVTTCFIFSMVGLYYINKISSTLYQAATPVLTPAKVTGKGKKRN</sequence>
<feature type="chain" id="PRO_0000370223" description="Dolichyl-diphosphooligosaccharide--protein glycosyltransferase subunit KCP2">
    <location>
        <begin position="1"/>
        <end position="136"/>
    </location>
</feature>
<feature type="topological domain" description="Lumenal" evidence="5">
    <location>
        <begin position="1"/>
        <end position="5"/>
    </location>
</feature>
<feature type="transmembrane region" description="Helical" evidence="2">
    <location>
        <begin position="6"/>
        <end position="23"/>
    </location>
</feature>
<feature type="topological domain" description="Cytoplasmic" evidence="5">
    <location>
        <begin position="24"/>
        <end position="34"/>
    </location>
</feature>
<feature type="transmembrane region" description="Helical" evidence="2">
    <location>
        <begin position="35"/>
        <end position="55"/>
    </location>
</feature>
<feature type="topological domain" description="Lumenal" evidence="5">
    <location>
        <begin position="56"/>
        <end position="75"/>
    </location>
</feature>
<feature type="transmembrane region" description="Helical" evidence="2">
    <location>
        <begin position="76"/>
        <end position="108"/>
    </location>
</feature>
<feature type="topological domain" description="Cytoplasmic" evidence="5">
    <location>
        <begin position="109"/>
        <end position="136"/>
    </location>
</feature>
<feature type="short sequence motif" description="Prevents secretion from ER" evidence="2">
    <location>
        <begin position="133"/>
        <end position="136"/>
    </location>
</feature>
<feature type="modified residue" description="Phosphothreonine" evidence="1">
    <location>
        <position position="124"/>
    </location>
</feature>
<keyword id="KW-0903">Direct protein sequencing</keyword>
<keyword id="KW-0256">Endoplasmic reticulum</keyword>
<keyword id="KW-0472">Membrane</keyword>
<keyword id="KW-0597">Phosphoprotein</keyword>
<keyword id="KW-1185">Reference proteome</keyword>
<keyword id="KW-0812">Transmembrane</keyword>
<keyword id="KW-1133">Transmembrane helix</keyword>
<gene>
    <name evidence="1" type="primary">KRTCAP2</name>
    <name evidence="1" type="synonym">KCP2</name>
</gene>